<proteinExistence type="evidence at transcript level"/>
<name>XTH3_ARATH</name>
<evidence type="ECO:0000250" key="1"/>
<evidence type="ECO:0000250" key="2">
    <source>
        <dbReference type="UniProtKB" id="Q8GZD5"/>
    </source>
</evidence>
<evidence type="ECO:0000255" key="3"/>
<evidence type="ECO:0000255" key="4">
    <source>
        <dbReference type="PROSITE-ProRule" id="PRU01098"/>
    </source>
</evidence>
<evidence type="ECO:0000269" key="5">
    <source>
    </source>
</evidence>
<evidence type="ECO:0000305" key="6"/>
<comment type="function">
    <text evidence="1">Catalyzes xyloglucan endohydrolysis (XEH) and/or endotransglycosylation (XET). Cleaves and religates xyloglucan polymers, an essential constituent of the primary cell wall, and thereby participates in cell wall construction of growing tissues (By similarity).</text>
</comment>
<comment type="catalytic activity">
    <reaction>
        <text>breaks a beta-(1-&gt;4) bond in the backbone of a xyloglucan and transfers the xyloglucanyl segment on to O-4 of the non-reducing terminal glucose residue of an acceptor, which can be a xyloglucan or an oligosaccharide of xyloglucan.</text>
        <dbReference type="EC" id="2.4.1.207"/>
    </reaction>
</comment>
<comment type="subcellular location">
    <subcellularLocation>
        <location evidence="6">Secreted</location>
        <location evidence="6">Cell wall</location>
    </subcellularLocation>
    <subcellularLocation>
        <location evidence="6">Secreted</location>
        <location evidence="6">Extracellular space</location>
        <location evidence="6">Apoplast</location>
    </subcellularLocation>
</comment>
<comment type="tissue specificity">
    <text evidence="5">Predominantly expressed in flower buds.</text>
</comment>
<comment type="induction">
    <text evidence="5">By auxin and brassinolide.</text>
</comment>
<comment type="PTM">
    <text evidence="1">Contains at least one intrachain disulfide bond essential for its enzymatic activity.</text>
</comment>
<comment type="similarity">
    <text evidence="6">Belongs to the glycosyl hydrolase 16 family. XTH group 1 subfamily.</text>
</comment>
<feature type="signal peptide" evidence="3">
    <location>
        <begin position="1"/>
        <end position="21"/>
    </location>
</feature>
<feature type="chain" id="PRO_0000011803" description="Xyloglucan endotransglucosylase/hydrolase protein 3">
    <location>
        <begin position="22"/>
        <end position="290"/>
    </location>
</feature>
<feature type="domain" description="GH16" evidence="4">
    <location>
        <begin position="22"/>
        <end position="220"/>
    </location>
</feature>
<feature type="active site" description="Nucleophile" evidence="2">
    <location>
        <position position="109"/>
    </location>
</feature>
<feature type="active site" description="Proton donor" evidence="2">
    <location>
        <position position="113"/>
    </location>
</feature>
<feature type="binding site" evidence="2">
    <location>
        <position position="113"/>
    </location>
    <ligand>
        <name>xyloglucan</name>
        <dbReference type="ChEBI" id="CHEBI:18233"/>
    </ligand>
</feature>
<feature type="binding site" evidence="2">
    <location>
        <begin position="126"/>
        <end position="128"/>
    </location>
    <ligand>
        <name>xyloglucan</name>
        <dbReference type="ChEBI" id="CHEBI:18233"/>
    </ligand>
</feature>
<feature type="binding site" evidence="2">
    <location>
        <begin position="136"/>
        <end position="138"/>
    </location>
    <ligand>
        <name>xyloglucan</name>
        <dbReference type="ChEBI" id="CHEBI:18233"/>
    </ligand>
</feature>
<feature type="binding site" evidence="2">
    <location>
        <begin position="199"/>
        <end position="200"/>
    </location>
    <ligand>
        <name>xyloglucan</name>
        <dbReference type="ChEBI" id="CHEBI:18233"/>
    </ligand>
</feature>
<feature type="binding site" evidence="2">
    <location>
        <position position="204"/>
    </location>
    <ligand>
        <name>xyloglucan</name>
        <dbReference type="ChEBI" id="CHEBI:18233"/>
    </ligand>
</feature>
<feature type="site" description="Important for catalytic activity" evidence="2">
    <location>
        <position position="111"/>
    </location>
</feature>
<feature type="glycosylation site" description="N-linked (GlcNAc...) asparagine" evidence="3">
    <location>
        <position position="210"/>
    </location>
</feature>
<feature type="disulfide bond" evidence="2">
    <location>
        <begin position="228"/>
        <end position="240"/>
    </location>
</feature>
<feature type="disulfide bond" evidence="2">
    <location>
        <begin position="276"/>
        <end position="289"/>
    </location>
</feature>
<gene>
    <name type="primary">XTH3</name>
    <name type="ordered locus">At3g25050</name>
    <name type="ORF">K3G3.6</name>
</gene>
<accession>Q9LJR7</accession>
<accession>Q1PEM0</accession>
<dbReference type="EC" id="2.4.1.207"/>
<dbReference type="EMBL" id="AP000412">
    <property type="protein sequence ID" value="BAB01890.1"/>
    <property type="molecule type" value="Genomic_DNA"/>
</dbReference>
<dbReference type="EMBL" id="CP002686">
    <property type="protein sequence ID" value="AEE76972.1"/>
    <property type="molecule type" value="Genomic_DNA"/>
</dbReference>
<dbReference type="EMBL" id="DQ446697">
    <property type="protein sequence ID" value="ABE65966.1"/>
    <property type="molecule type" value="mRNA"/>
</dbReference>
<dbReference type="RefSeq" id="NP_189141.1">
    <property type="nucleotide sequence ID" value="NM_113409.4"/>
</dbReference>
<dbReference type="SMR" id="Q9LJR7"/>
<dbReference type="FunCoup" id="Q9LJR7">
    <property type="interactions" value="50"/>
</dbReference>
<dbReference type="STRING" id="3702.Q9LJR7"/>
<dbReference type="CAZy" id="GH16">
    <property type="family name" value="Glycoside Hydrolase Family 16"/>
</dbReference>
<dbReference type="GlyCosmos" id="Q9LJR7">
    <property type="glycosylation" value="1 site, No reported glycans"/>
</dbReference>
<dbReference type="GlyGen" id="Q9LJR7">
    <property type="glycosylation" value="1 site"/>
</dbReference>
<dbReference type="PaxDb" id="3702-AT3G25050.1"/>
<dbReference type="ProteomicsDB" id="242427"/>
<dbReference type="EnsemblPlants" id="AT3G25050.1">
    <property type="protein sequence ID" value="AT3G25050.1"/>
    <property type="gene ID" value="AT3G25050"/>
</dbReference>
<dbReference type="GeneID" id="822096"/>
<dbReference type="Gramene" id="AT3G25050.1">
    <property type="protein sequence ID" value="AT3G25050.1"/>
    <property type="gene ID" value="AT3G25050"/>
</dbReference>
<dbReference type="KEGG" id="ath:AT3G25050"/>
<dbReference type="Araport" id="AT3G25050"/>
<dbReference type="TAIR" id="AT3G25050">
    <property type="gene designation" value="XTH3"/>
</dbReference>
<dbReference type="eggNOG" id="KOG0017">
    <property type="taxonomic scope" value="Eukaryota"/>
</dbReference>
<dbReference type="HOGENOM" id="CLU_048041_0_0_1"/>
<dbReference type="InParanoid" id="Q9LJR7"/>
<dbReference type="OMA" id="WGQSHVS"/>
<dbReference type="OrthoDB" id="4781at2759"/>
<dbReference type="PhylomeDB" id="Q9LJR7"/>
<dbReference type="BioCyc" id="ARA:AT3G25050-MONOMER"/>
<dbReference type="PRO" id="PR:Q9LJR7"/>
<dbReference type="Proteomes" id="UP000006548">
    <property type="component" value="Chromosome 3"/>
</dbReference>
<dbReference type="ExpressionAtlas" id="Q9LJR7">
    <property type="expression patterns" value="baseline and differential"/>
</dbReference>
<dbReference type="GO" id="GO:0048046">
    <property type="term" value="C:apoplast"/>
    <property type="evidence" value="ECO:0007669"/>
    <property type="project" value="UniProtKB-SubCell"/>
</dbReference>
<dbReference type="GO" id="GO:0004553">
    <property type="term" value="F:hydrolase activity, hydrolyzing O-glycosyl compounds"/>
    <property type="evidence" value="ECO:0007669"/>
    <property type="project" value="InterPro"/>
</dbReference>
<dbReference type="GO" id="GO:0030247">
    <property type="term" value="F:polysaccharide binding"/>
    <property type="evidence" value="ECO:0000250"/>
    <property type="project" value="UniProtKB"/>
</dbReference>
<dbReference type="GO" id="GO:0016762">
    <property type="term" value="F:xyloglucan:xyloglucosyl transferase activity"/>
    <property type="evidence" value="ECO:0000314"/>
    <property type="project" value="TAIR"/>
</dbReference>
<dbReference type="GO" id="GO:0071555">
    <property type="term" value="P:cell wall organization"/>
    <property type="evidence" value="ECO:0007669"/>
    <property type="project" value="UniProtKB-KW"/>
</dbReference>
<dbReference type="GO" id="GO:0030243">
    <property type="term" value="P:cellulose metabolic process"/>
    <property type="evidence" value="ECO:0000314"/>
    <property type="project" value="TAIR"/>
</dbReference>
<dbReference type="GO" id="GO:0048573">
    <property type="term" value="P:photoperiodism, flowering"/>
    <property type="evidence" value="ECO:0000315"/>
    <property type="project" value="TAIR"/>
</dbReference>
<dbReference type="GO" id="GO:0009832">
    <property type="term" value="P:plant-type cell wall biogenesis"/>
    <property type="evidence" value="ECO:0000250"/>
    <property type="project" value="TAIR"/>
</dbReference>
<dbReference type="GO" id="GO:0010411">
    <property type="term" value="P:xyloglucan metabolic process"/>
    <property type="evidence" value="ECO:0007669"/>
    <property type="project" value="InterPro"/>
</dbReference>
<dbReference type="CDD" id="cd02176">
    <property type="entry name" value="GH16_XET"/>
    <property type="match status" value="1"/>
</dbReference>
<dbReference type="FunFam" id="2.60.120.200:FF:000025">
    <property type="entry name" value="Xyloglucan endotransglucosylase/hydrolase"/>
    <property type="match status" value="1"/>
</dbReference>
<dbReference type="Gene3D" id="2.60.120.200">
    <property type="match status" value="1"/>
</dbReference>
<dbReference type="InterPro" id="IPR044791">
    <property type="entry name" value="Beta-glucanase/XTH"/>
</dbReference>
<dbReference type="InterPro" id="IPR008264">
    <property type="entry name" value="Beta_glucanase"/>
</dbReference>
<dbReference type="InterPro" id="IPR013320">
    <property type="entry name" value="ConA-like_dom_sf"/>
</dbReference>
<dbReference type="InterPro" id="IPR000757">
    <property type="entry name" value="GH16"/>
</dbReference>
<dbReference type="InterPro" id="IPR010713">
    <property type="entry name" value="XET_C"/>
</dbReference>
<dbReference type="InterPro" id="IPR016455">
    <property type="entry name" value="XTH"/>
</dbReference>
<dbReference type="PANTHER" id="PTHR31062">
    <property type="entry name" value="XYLOGLUCAN ENDOTRANSGLUCOSYLASE/HYDROLASE PROTEIN 8-RELATED"/>
    <property type="match status" value="1"/>
</dbReference>
<dbReference type="Pfam" id="PF00722">
    <property type="entry name" value="Glyco_hydro_16"/>
    <property type="match status" value="1"/>
</dbReference>
<dbReference type="Pfam" id="PF06955">
    <property type="entry name" value="XET_C"/>
    <property type="match status" value="1"/>
</dbReference>
<dbReference type="PIRSF" id="PIRSF005604">
    <property type="entry name" value="XET"/>
    <property type="match status" value="1"/>
</dbReference>
<dbReference type="PRINTS" id="PR00737">
    <property type="entry name" value="GLHYDRLASE16"/>
</dbReference>
<dbReference type="SUPFAM" id="SSF49899">
    <property type="entry name" value="Concanavalin A-like lectins/glucanases"/>
    <property type="match status" value="1"/>
</dbReference>
<dbReference type="PROSITE" id="PS51762">
    <property type="entry name" value="GH16_2"/>
    <property type="match status" value="1"/>
</dbReference>
<reference key="1">
    <citation type="journal article" date="2000" name="DNA Res.">
        <title>Structural analysis of Arabidopsis thaliana chromosome 3. II. Sequence features of the 4,251,695 bp regions covered by 90 P1, TAC and BAC clones.</title>
        <authorList>
            <person name="Kaneko T."/>
            <person name="Katoh T."/>
            <person name="Sato S."/>
            <person name="Nakamura Y."/>
            <person name="Asamizu E."/>
            <person name="Tabata S."/>
        </authorList>
    </citation>
    <scope>NUCLEOTIDE SEQUENCE [LARGE SCALE GENOMIC DNA]</scope>
    <source>
        <strain>cv. Columbia</strain>
    </source>
</reference>
<reference key="2">
    <citation type="journal article" date="2017" name="Plant J.">
        <title>Araport11: a complete reannotation of the Arabidopsis thaliana reference genome.</title>
        <authorList>
            <person name="Cheng C.Y."/>
            <person name="Krishnakumar V."/>
            <person name="Chan A.P."/>
            <person name="Thibaud-Nissen F."/>
            <person name="Schobel S."/>
            <person name="Town C.D."/>
        </authorList>
    </citation>
    <scope>GENOME REANNOTATION</scope>
    <source>
        <strain>cv. Columbia</strain>
    </source>
</reference>
<reference key="3">
    <citation type="journal article" date="2006" name="Plant Biotechnol. J.">
        <title>Simultaneous high-throughput recombinational cloning of open reading frames in closed and open configurations.</title>
        <authorList>
            <person name="Underwood B.A."/>
            <person name="Vanderhaeghen R."/>
            <person name="Whitford R."/>
            <person name="Town C.D."/>
            <person name="Hilson P."/>
        </authorList>
    </citation>
    <scope>NUCLEOTIDE SEQUENCE [LARGE SCALE MRNA]</scope>
    <source>
        <strain>cv. Columbia</strain>
    </source>
</reference>
<reference key="4">
    <citation type="journal article" date="2001" name="Plant Cell Physiol.">
        <title>A comprehensive expression analysis of all members of a gene family encoding cell-wall enzymes allowed us to predict cis-regulatory regions involved in cell-wall construction in specific organs of Arabidopsis.</title>
        <authorList>
            <person name="Yokoyama R."/>
            <person name="Nishitani K."/>
        </authorList>
    </citation>
    <scope>TISSUE SPECIFICITY</scope>
    <scope>INDUCTION</scope>
</reference>
<reference key="5">
    <citation type="journal article" date="2002" name="Plant Cell Physiol.">
        <title>The XTH family of enzymes involved in xyloglucan endotransglucosylation and endohydrolysis: current perspectives and a new unifying nomenclature.</title>
        <authorList>
            <person name="Rose J.K.C."/>
            <person name="Braam J."/>
            <person name="Fry S.C."/>
            <person name="Nishitani K."/>
        </authorList>
    </citation>
    <scope>NOMENCLATURE</scope>
</reference>
<organism>
    <name type="scientific">Arabidopsis thaliana</name>
    <name type="common">Mouse-ear cress</name>
    <dbReference type="NCBI Taxonomy" id="3702"/>
    <lineage>
        <taxon>Eukaryota</taxon>
        <taxon>Viridiplantae</taxon>
        <taxon>Streptophyta</taxon>
        <taxon>Embryophyta</taxon>
        <taxon>Tracheophyta</taxon>
        <taxon>Spermatophyta</taxon>
        <taxon>Magnoliopsida</taxon>
        <taxon>eudicotyledons</taxon>
        <taxon>Gunneridae</taxon>
        <taxon>Pentapetalae</taxon>
        <taxon>rosids</taxon>
        <taxon>malvids</taxon>
        <taxon>Brassicales</taxon>
        <taxon>Brassicaceae</taxon>
        <taxon>Camelineae</taxon>
        <taxon>Arabidopsis</taxon>
    </lineage>
</organism>
<protein>
    <recommendedName>
        <fullName>Xyloglucan endotransglucosylase/hydrolase protein 3</fullName>
        <shortName>At-XTH3</shortName>
        <shortName>XTH-3</shortName>
        <ecNumber>2.4.1.207</ecNumber>
    </recommendedName>
</protein>
<sequence>MDYMRIFSVFVVTLWIIRVDARVFGGRGIEKFVTFGQNYIVTWGQSHVSTLHSGEEVDLYMDQSSGGGFESKDAYGSGLFEMRIKVPSGNTGGIVTAFYLTSKGGGHDEIDFEFLGNNNGKPVTLQTNLFLNGEGNREERFLLWFNPTKHYHTYGLLWNPYQIVFYVDNIPIRVYKNENGVSYPSKPMQVEASLWNGDDWATDGGRTKVNWSYSPFIAHFRDFALSGCNIDGRSNNVGACESSNYWWNAGNYQRLSGNEQKLYEHVRSKYMNYDYCTDRSKYQTPPRECY</sequence>
<keyword id="KW-0052">Apoplast</keyword>
<keyword id="KW-0134">Cell wall</keyword>
<keyword id="KW-0961">Cell wall biogenesis/degradation</keyword>
<keyword id="KW-1015">Disulfide bond</keyword>
<keyword id="KW-0325">Glycoprotein</keyword>
<keyword id="KW-0326">Glycosidase</keyword>
<keyword id="KW-0378">Hydrolase</keyword>
<keyword id="KW-1185">Reference proteome</keyword>
<keyword id="KW-0964">Secreted</keyword>
<keyword id="KW-0732">Signal</keyword>
<keyword id="KW-0808">Transferase</keyword>